<gene>
    <name evidence="4" type="primary">CNIH1</name>
    <name evidence="7" type="ordered locus">Os06g0136500</name>
    <name evidence="5" type="ordered locus">LOC_Os06g04500</name>
</gene>
<name>CNIH1_ORYSJ</name>
<accession>Q0DET3</accession>
<accession>A0A0P0WS32</accession>
<accession>A3B864</accession>
<reference key="1">
    <citation type="journal article" date="2005" name="Nature">
        <title>The map-based sequence of the rice genome.</title>
        <authorList>
            <consortium name="International rice genome sequencing project (IRGSP)"/>
        </authorList>
    </citation>
    <scope>NUCLEOTIDE SEQUENCE [LARGE SCALE GENOMIC DNA]</scope>
    <source>
        <strain>cv. Nipponbare</strain>
    </source>
</reference>
<reference key="2">
    <citation type="journal article" date="2008" name="Nucleic Acids Res.">
        <title>The rice annotation project database (RAP-DB): 2008 update.</title>
        <authorList>
            <consortium name="The rice annotation project (RAP)"/>
        </authorList>
    </citation>
    <scope>GENOME REANNOTATION</scope>
    <source>
        <strain>cv. Nipponbare</strain>
    </source>
</reference>
<reference key="3">
    <citation type="journal article" date="2013" name="Rice">
        <title>Improvement of the Oryza sativa Nipponbare reference genome using next generation sequence and optical map data.</title>
        <authorList>
            <person name="Kawahara Y."/>
            <person name="de la Bastide M."/>
            <person name="Hamilton J.P."/>
            <person name="Kanamori H."/>
            <person name="McCombie W.R."/>
            <person name="Ouyang S."/>
            <person name="Schwartz D.C."/>
            <person name="Tanaka T."/>
            <person name="Wu J."/>
            <person name="Zhou S."/>
            <person name="Childs K.L."/>
            <person name="Davidson R.M."/>
            <person name="Lin H."/>
            <person name="Quesada-Ocampo L."/>
            <person name="Vaillancourt B."/>
            <person name="Sakai H."/>
            <person name="Lee S.S."/>
            <person name="Kim J."/>
            <person name="Numa H."/>
            <person name="Itoh T."/>
            <person name="Buell C.R."/>
            <person name="Matsumoto T."/>
        </authorList>
    </citation>
    <scope>GENOME REANNOTATION</scope>
    <source>
        <strain>cv. Nipponbare</strain>
    </source>
</reference>
<reference key="4">
    <citation type="journal article" date="2005" name="PLoS Biol.">
        <title>The genomes of Oryza sativa: a history of duplications.</title>
        <authorList>
            <person name="Yu J."/>
            <person name="Wang J."/>
            <person name="Lin W."/>
            <person name="Li S."/>
            <person name="Li H."/>
            <person name="Zhou J."/>
            <person name="Ni P."/>
            <person name="Dong W."/>
            <person name="Hu S."/>
            <person name="Zeng C."/>
            <person name="Zhang J."/>
            <person name="Zhang Y."/>
            <person name="Li R."/>
            <person name="Xu Z."/>
            <person name="Li S."/>
            <person name="Li X."/>
            <person name="Zheng H."/>
            <person name="Cong L."/>
            <person name="Lin L."/>
            <person name="Yin J."/>
            <person name="Geng J."/>
            <person name="Li G."/>
            <person name="Shi J."/>
            <person name="Liu J."/>
            <person name="Lv H."/>
            <person name="Li J."/>
            <person name="Wang J."/>
            <person name="Deng Y."/>
            <person name="Ran L."/>
            <person name="Shi X."/>
            <person name="Wang X."/>
            <person name="Wu Q."/>
            <person name="Li C."/>
            <person name="Ren X."/>
            <person name="Wang J."/>
            <person name="Wang X."/>
            <person name="Li D."/>
            <person name="Liu D."/>
            <person name="Zhang X."/>
            <person name="Ji Z."/>
            <person name="Zhao W."/>
            <person name="Sun Y."/>
            <person name="Zhang Z."/>
            <person name="Bao J."/>
            <person name="Han Y."/>
            <person name="Dong L."/>
            <person name="Ji J."/>
            <person name="Chen P."/>
            <person name="Wu S."/>
            <person name="Liu J."/>
            <person name="Xiao Y."/>
            <person name="Bu D."/>
            <person name="Tan J."/>
            <person name="Yang L."/>
            <person name="Ye C."/>
            <person name="Zhang J."/>
            <person name="Xu J."/>
            <person name="Zhou Y."/>
            <person name="Yu Y."/>
            <person name="Zhang B."/>
            <person name="Zhuang S."/>
            <person name="Wei H."/>
            <person name="Liu B."/>
            <person name="Lei M."/>
            <person name="Yu H."/>
            <person name="Li Y."/>
            <person name="Xu H."/>
            <person name="Wei S."/>
            <person name="He X."/>
            <person name="Fang L."/>
            <person name="Zhang Z."/>
            <person name="Zhang Y."/>
            <person name="Huang X."/>
            <person name="Su Z."/>
            <person name="Tong W."/>
            <person name="Li J."/>
            <person name="Tong Z."/>
            <person name="Li S."/>
            <person name="Ye J."/>
            <person name="Wang L."/>
            <person name="Fang L."/>
            <person name="Lei T."/>
            <person name="Chen C.-S."/>
            <person name="Chen H.-C."/>
            <person name="Xu Z."/>
            <person name="Li H."/>
            <person name="Huang H."/>
            <person name="Zhang F."/>
            <person name="Xu H."/>
            <person name="Li N."/>
            <person name="Zhao C."/>
            <person name="Li S."/>
            <person name="Dong L."/>
            <person name="Huang Y."/>
            <person name="Li L."/>
            <person name="Xi Y."/>
            <person name="Qi Q."/>
            <person name="Li W."/>
            <person name="Zhang B."/>
            <person name="Hu W."/>
            <person name="Zhang Y."/>
            <person name="Tian X."/>
            <person name="Jiao Y."/>
            <person name="Liang X."/>
            <person name="Jin J."/>
            <person name="Gao L."/>
            <person name="Zheng W."/>
            <person name="Hao B."/>
            <person name="Liu S.-M."/>
            <person name="Wang W."/>
            <person name="Yuan L."/>
            <person name="Cao M."/>
            <person name="McDermott J."/>
            <person name="Samudrala R."/>
            <person name="Wang J."/>
            <person name="Wong G.K.-S."/>
            <person name="Yang H."/>
        </authorList>
    </citation>
    <scope>NUCLEOTIDE SEQUENCE [LARGE SCALE GENOMIC DNA]</scope>
    <source>
        <strain>cv. Nipponbare</strain>
    </source>
</reference>
<reference key="5">
    <citation type="journal article" date="2015" name="J. Exp. Bot.">
        <title>Identification of rice cornichon as a possible cargo receptor for the Golgi-localized sodium transporter OsHKT1;3.</title>
        <authorList>
            <person name="Rosas-Santiago P."/>
            <person name="Lagunas-Gomez D."/>
            <person name="Barkla B.J."/>
            <person name="Vera-Estrella R."/>
            <person name="Lalonde S."/>
            <person name="Jones A."/>
            <person name="Frommer W.B."/>
            <person name="Zimmermannova O."/>
            <person name="Sychrova H."/>
            <person name="Pantoja O."/>
        </authorList>
    </citation>
    <scope>FUNCTION</scope>
    <scope>INTERACTION WITH HKT1;3</scope>
    <scope>SUBCELLULAR LOCATION</scope>
</reference>
<reference key="6">
    <citation type="journal article" date="2017" name="Biochim. Biophys. Acta">
        <title>Plant and yeast cornichon possess a conserved acidic motif required for correct targeting of plasma membrane cargos.</title>
        <authorList>
            <person name="Rosas-Santiago P."/>
            <person name="Lagunas-Gomez D."/>
            <person name="Yanez-Dominguez C."/>
            <person name="Vera-Estrella R."/>
            <person name="Zimmermannova O."/>
            <person name="Sychrova H."/>
            <person name="Pantoja O."/>
        </authorList>
    </citation>
    <scope>FUNCTION</scope>
    <scope>INTERACTION WITH HKT1;3</scope>
    <scope>SUBCELLULAR LOCATION</scope>
    <scope>MUTAGENESIS OF 132-GLU--GLU-135</scope>
</reference>
<evidence type="ECO:0000255" key="1"/>
<evidence type="ECO:0000269" key="2">
    <source>
    </source>
</evidence>
<evidence type="ECO:0000269" key="3">
    <source>
    </source>
</evidence>
<evidence type="ECO:0000303" key="4">
    <source>
    </source>
</evidence>
<evidence type="ECO:0000305" key="5"/>
<evidence type="ECO:0000305" key="6">
    <source>
    </source>
</evidence>
<evidence type="ECO:0000312" key="7">
    <source>
        <dbReference type="EMBL" id="BAS96035.1"/>
    </source>
</evidence>
<keyword id="KW-0256">Endoplasmic reticulum</keyword>
<keyword id="KW-0333">Golgi apparatus</keyword>
<keyword id="KW-0472">Membrane</keyword>
<keyword id="KW-1185">Reference proteome</keyword>
<keyword id="KW-0812">Transmembrane</keyword>
<keyword id="KW-1133">Transmembrane helix</keyword>
<sequence>MVFVWLTAFFLVVALIVLVIYQLMCLADLEFDYINPFDSSSRINKVVIPEFVLQAALSVLFLLSGHWAMFLLSAPMVYYNYTLYQRRQHLVDVTEIFNHLGREKKRRLFKIVGLIILLFLSLFWMIWTVLLEEDE</sequence>
<organism>
    <name type="scientific">Oryza sativa subsp. japonica</name>
    <name type="common">Rice</name>
    <dbReference type="NCBI Taxonomy" id="39947"/>
    <lineage>
        <taxon>Eukaryota</taxon>
        <taxon>Viridiplantae</taxon>
        <taxon>Streptophyta</taxon>
        <taxon>Embryophyta</taxon>
        <taxon>Tracheophyta</taxon>
        <taxon>Spermatophyta</taxon>
        <taxon>Magnoliopsida</taxon>
        <taxon>Liliopsida</taxon>
        <taxon>Poales</taxon>
        <taxon>Poaceae</taxon>
        <taxon>BOP clade</taxon>
        <taxon>Oryzoideae</taxon>
        <taxon>Oryzeae</taxon>
        <taxon>Oryzinae</taxon>
        <taxon>Oryza</taxon>
        <taxon>Oryza sativa</taxon>
    </lineage>
</organism>
<dbReference type="EMBL" id="AP008212">
    <property type="protein sequence ID" value="BAF18640.1"/>
    <property type="status" value="ALT_SEQ"/>
    <property type="molecule type" value="Genomic_DNA"/>
</dbReference>
<dbReference type="EMBL" id="AP014962">
    <property type="protein sequence ID" value="BAS96035.1"/>
    <property type="status" value="ALT_SEQ"/>
    <property type="molecule type" value="Genomic_DNA"/>
</dbReference>
<dbReference type="EMBL" id="CM000143">
    <property type="protein sequence ID" value="EAZ35753.1"/>
    <property type="status" value="ALT_SEQ"/>
    <property type="molecule type" value="Genomic_DNA"/>
</dbReference>
<dbReference type="RefSeq" id="XP_015643742.1">
    <property type="nucleotide sequence ID" value="XM_015788256.1"/>
</dbReference>
<dbReference type="SMR" id="Q0DET3"/>
<dbReference type="FunCoup" id="Q0DET3">
    <property type="interactions" value="568"/>
</dbReference>
<dbReference type="STRING" id="39947.Q0DET3"/>
<dbReference type="PaxDb" id="39947-Q0DET3"/>
<dbReference type="KEGG" id="dosa:Os06g0136500"/>
<dbReference type="eggNOG" id="KOG2729">
    <property type="taxonomic scope" value="Eukaryota"/>
</dbReference>
<dbReference type="HOGENOM" id="CLU_112942_2_0_1"/>
<dbReference type="InParanoid" id="Q0DET3"/>
<dbReference type="OrthoDB" id="434393at2759"/>
<dbReference type="Proteomes" id="UP000000763">
    <property type="component" value="Chromosome 6"/>
</dbReference>
<dbReference type="Proteomes" id="UP000007752">
    <property type="component" value="Chromosome 6"/>
</dbReference>
<dbReference type="Proteomes" id="UP000059680">
    <property type="component" value="Chromosome 6"/>
</dbReference>
<dbReference type="GO" id="GO:0005789">
    <property type="term" value="C:endoplasmic reticulum membrane"/>
    <property type="evidence" value="ECO:0000314"/>
    <property type="project" value="UniProtKB"/>
</dbReference>
<dbReference type="GO" id="GO:0000139">
    <property type="term" value="C:Golgi membrane"/>
    <property type="evidence" value="ECO:0000314"/>
    <property type="project" value="UniProtKB"/>
</dbReference>
<dbReference type="GO" id="GO:0038024">
    <property type="term" value="F:cargo receptor activity"/>
    <property type="evidence" value="ECO:0000314"/>
    <property type="project" value="UniProtKB"/>
</dbReference>
<dbReference type="GO" id="GO:0005102">
    <property type="term" value="F:signaling receptor binding"/>
    <property type="evidence" value="ECO:0000318"/>
    <property type="project" value="GO_Central"/>
</dbReference>
<dbReference type="GO" id="GO:0016192">
    <property type="term" value="P:vesicle-mediated transport"/>
    <property type="evidence" value="ECO:0000314"/>
    <property type="project" value="UniProtKB"/>
</dbReference>
<dbReference type="InterPro" id="IPR003377">
    <property type="entry name" value="Cornichon"/>
</dbReference>
<dbReference type="PANTHER" id="PTHR12290">
    <property type="entry name" value="CORNICHON-RELATED"/>
    <property type="match status" value="1"/>
</dbReference>
<dbReference type="Pfam" id="PF03311">
    <property type="entry name" value="Cornichon"/>
    <property type="match status" value="1"/>
</dbReference>
<dbReference type="SMART" id="SM01398">
    <property type="entry name" value="Cornichon"/>
    <property type="match status" value="1"/>
</dbReference>
<feature type="chain" id="PRO_0000455963" description="Protein cornichon homolog 1">
    <location>
        <begin position="1"/>
        <end position="135"/>
    </location>
</feature>
<feature type="transmembrane region" description="Helical" evidence="1">
    <location>
        <begin position="2"/>
        <end position="22"/>
    </location>
</feature>
<feature type="transmembrane region" description="Helical" evidence="1">
    <location>
        <begin position="51"/>
        <end position="71"/>
    </location>
</feature>
<feature type="transmembrane region" description="Helical" evidence="1">
    <location>
        <begin position="111"/>
        <end position="131"/>
    </location>
</feature>
<feature type="mutagenesis site" description="Does not modify subcellular localization, but reduces interaction with HKT1;3 and CNIH1 function as cargo receptor." evidence="3">
    <location>
        <begin position="132"/>
        <end position="135"/>
    </location>
</feature>
<comment type="function">
    <text evidence="2 3">Acts as a cargo receptor necessary for the transportation of the cation transporter HKT1;3 and possibly other secretory proteins from the endoplasmic reticulum (ER) in COPII-coated vesicles targeted to the Golgi apparatus.</text>
</comment>
<comment type="subunit">
    <text evidence="2 3">Interacts with HKT1;3.</text>
</comment>
<comment type="subcellular location">
    <subcellularLocation>
        <location evidence="2 3">Endoplasmic reticulum membrane</location>
        <topology evidence="1">Multi-pass membrane protein</topology>
    </subcellularLocation>
    <subcellularLocation>
        <location evidence="2 3">Golgi apparatus membrane</location>
        <topology evidence="1">Multi-pass membrane protein</topology>
    </subcellularLocation>
    <text evidence="6">Located primarily in the endoplasmic reticulum (ER); may cycle between the ER and the Golgi apparatus.</text>
</comment>
<comment type="similarity">
    <text evidence="5">Belongs to the cornichon family.</text>
</comment>
<comment type="sequence caution" evidence="5">
    <conflict type="erroneous gene model prediction">
        <sequence resource="EMBL-CDS" id="BAF18640"/>
    </conflict>
</comment>
<comment type="sequence caution" evidence="5">
    <conflict type="erroneous gene model prediction">
        <sequence resource="EMBL-CDS" id="BAS96035"/>
    </conflict>
</comment>
<comment type="sequence caution" evidence="5">
    <conflict type="erroneous gene model prediction">
        <sequence resource="EMBL-CDS" id="EAZ35753"/>
    </conflict>
</comment>
<proteinExistence type="evidence at protein level"/>
<protein>
    <recommendedName>
        <fullName evidence="5">Protein cornichon homolog 1</fullName>
        <shortName evidence="4">OsCNIH</shortName>
    </recommendedName>
</protein>